<proteinExistence type="inferred from homology"/>
<reference key="1">
    <citation type="journal article" date="1994" name="J. Bacteriol.">
        <title>Biochemical and molecular characterization of the Alcaligenes eutrophus pyruvate dehydrogenase complex and identification of a new type of dihydrolipoamide dehydrogenase.</title>
        <authorList>
            <person name="Hein S."/>
            <person name="Steinbuechel A."/>
        </authorList>
    </citation>
    <scope>NUCLEOTIDE SEQUENCE [GENOMIC DNA]</scope>
</reference>
<reference key="2">
    <citation type="journal article" date="2006" name="Nat. Biotechnol.">
        <title>Genome sequence of the bioplastic-producing 'Knallgas' bacterium Ralstonia eutropha H16.</title>
        <authorList>
            <person name="Pohlmann A."/>
            <person name="Fricke W.F."/>
            <person name="Reinecke F."/>
            <person name="Kusian B."/>
            <person name="Liesegang H."/>
            <person name="Cramm R."/>
            <person name="Eitinger T."/>
            <person name="Ewering C."/>
            <person name="Poetter M."/>
            <person name="Schwartz E."/>
            <person name="Strittmatter A."/>
            <person name="Voss I."/>
            <person name="Gottschalk G."/>
            <person name="Steinbuechel A."/>
            <person name="Friedrich B."/>
            <person name="Bowien B."/>
        </authorList>
    </citation>
    <scope>NUCLEOTIDE SEQUENCE [LARGE SCALE GENOMIC DNA]</scope>
    <source>
        <strain>ATCC 17699 / DSM 428 / KCTC 22496 / NCIMB 10442 / H16 / Stanier 337</strain>
    </source>
</reference>
<keyword id="KW-0012">Acyltransferase</keyword>
<keyword id="KW-0450">Lipoyl</keyword>
<keyword id="KW-1185">Reference proteome</keyword>
<keyword id="KW-0677">Repeat</keyword>
<keyword id="KW-0808">Transferase</keyword>
<gene>
    <name type="primary">pdhB</name>
    <name type="ordered locus">H16_A1375</name>
</gene>
<sequence length="553" mass="56582">MSQAIEIKVPDIGDYDAVPVIEVHVKPGDSINAEDALVTLESDKATMDVPSPQAGVVKDVRIKVGDNVSEGSVLVMLEAANEPAAAPAPAAAAPAPAAAAPAPAPAPAAAPAAAPAAGGGGTIEVKVPDIGDYDAVPVIEVHVKAGDTINAEDAVVTLESDKATMDVPSPQGGVVKEVKVKVGDNVAEGTLLLILEGAAASAAPAAAAAAPAPAASAPAPAPAPAAAAPAPAAAPAAAPAAAGVTGKAAHASPSVRKFARELGVDVSRVPGTGPKGRITQEDVQGYVKGVMSGQAAAPAQAAAAGAGGGELGLLPWPKFDFTRFGEVESKALSRIKKISGANLHRNWVMIPHVTNHDEADITELEAFRLQLNKENEKSGIKVTMLAFMIKATVAALKKFPNFNASLDGDNLVLKKYFNIGFAADTPNGLVVPVIKDADKKGVLEISQEMSELAKLARDGKLKPDQMQGGCFSISSLGGLGGTYFTPIINAPEVAIMGVCKSYQKPVWDGKQFAPRLTLPLSLSWDHRVIDGAEAARFNTYFGQLLADFRRILL</sequence>
<feature type="chain" id="PRO_0000162271" description="Dihydrolipoyllysine-residue acetyltransferase component of pyruvate dehydrogenase complex">
    <location>
        <begin position="1"/>
        <end position="553"/>
    </location>
</feature>
<feature type="domain" description="Lipoyl-binding 1" evidence="3">
    <location>
        <begin position="4"/>
        <end position="78"/>
    </location>
</feature>
<feature type="domain" description="Lipoyl-binding 2" evidence="3">
    <location>
        <begin position="122"/>
        <end position="196"/>
    </location>
</feature>
<feature type="domain" description="Peripheral subunit-binding (PSBD)" evidence="4">
    <location>
        <begin position="250"/>
        <end position="287"/>
    </location>
</feature>
<feature type="region of interest" description="Disordered" evidence="5">
    <location>
        <begin position="97"/>
        <end position="118"/>
    </location>
</feature>
<feature type="active site" evidence="2">
    <location>
        <position position="526"/>
    </location>
</feature>
<feature type="modified residue" description="N6-lipoyllysine" evidence="1 3">
    <location>
        <position position="44"/>
    </location>
</feature>
<feature type="modified residue" description="N6-lipoyllysine" evidence="1 3">
    <location>
        <position position="162"/>
    </location>
</feature>
<feature type="sequence conflict" description="In Ref. 1; AAA21599." evidence="6" ref="1">
    <original>S</original>
    <variation>A</variation>
    <location>
        <position position="201"/>
    </location>
</feature>
<feature type="sequence conflict" description="In Ref. 1; AAA21599." evidence="6" ref="1">
    <original>F</original>
    <variation>V</variation>
    <location>
        <position position="319"/>
    </location>
</feature>
<comment type="function">
    <text>The pyruvate dehydrogenase complex catalyzes the overall conversion of pyruvate to acetyl-CoA and CO(2). It contains multiple copies of three enzymatic components: pyruvate dehydrogenase (E1), dihydrolipoamide acetyltransferase (E2) and lipoamide dehydrogenase (E3).</text>
</comment>
<comment type="catalytic activity">
    <reaction>
        <text>N(6)-[(R)-dihydrolipoyl]-L-lysyl-[protein] + acetyl-CoA = N(6)-[(R)-S(8)-acetyldihydrolipoyl]-L-lysyl-[protein] + CoA</text>
        <dbReference type="Rhea" id="RHEA:17017"/>
        <dbReference type="Rhea" id="RHEA-COMP:10475"/>
        <dbReference type="Rhea" id="RHEA-COMP:10478"/>
        <dbReference type="ChEBI" id="CHEBI:57287"/>
        <dbReference type="ChEBI" id="CHEBI:57288"/>
        <dbReference type="ChEBI" id="CHEBI:83100"/>
        <dbReference type="ChEBI" id="CHEBI:83111"/>
        <dbReference type="EC" id="2.3.1.12"/>
    </reaction>
</comment>
<comment type="cofactor">
    <cofactor evidence="1">
        <name>(R)-lipoate</name>
        <dbReference type="ChEBI" id="CHEBI:83088"/>
    </cofactor>
    <text evidence="1">Binds 2 lipoyl cofactors covalently.</text>
</comment>
<comment type="subunit">
    <text>Forms a 24-polypeptide structural core with octahedral symmetry.</text>
</comment>
<comment type="similarity">
    <text evidence="6">Belongs to the 2-oxoacid dehydrogenase family.</text>
</comment>
<comment type="sequence caution" evidence="6">
    <conflict type="frameshift">
        <sequence resource="EMBL-CDS" id="AAA21599"/>
    </conflict>
</comment>
<name>ODP2_CUPNH</name>
<evidence type="ECO:0000250" key="1"/>
<evidence type="ECO:0000255" key="2"/>
<evidence type="ECO:0000255" key="3">
    <source>
        <dbReference type="PROSITE-ProRule" id="PRU01066"/>
    </source>
</evidence>
<evidence type="ECO:0000255" key="4">
    <source>
        <dbReference type="PROSITE-ProRule" id="PRU01170"/>
    </source>
</evidence>
<evidence type="ECO:0000256" key="5">
    <source>
        <dbReference type="SAM" id="MobiDB-lite"/>
    </source>
</evidence>
<evidence type="ECO:0000305" key="6"/>
<dbReference type="EC" id="2.3.1.12"/>
<dbReference type="EMBL" id="U09865">
    <property type="protein sequence ID" value="AAA21599.1"/>
    <property type="status" value="ALT_FRAME"/>
    <property type="molecule type" value="Genomic_DNA"/>
</dbReference>
<dbReference type="EMBL" id="AM260479">
    <property type="protein sequence ID" value="CAJ92511.1"/>
    <property type="molecule type" value="Genomic_DNA"/>
</dbReference>
<dbReference type="PIR" id="B55514">
    <property type="entry name" value="B55514"/>
</dbReference>
<dbReference type="RefSeq" id="WP_011615028.1">
    <property type="nucleotide sequence ID" value="NC_008313.1"/>
</dbReference>
<dbReference type="SMR" id="Q59098"/>
<dbReference type="STRING" id="381666.H16_A1375"/>
<dbReference type="KEGG" id="reh:H16_A1375"/>
<dbReference type="PATRIC" id="fig|381666.6.peg.1764"/>
<dbReference type="eggNOG" id="COG0508">
    <property type="taxonomic scope" value="Bacteria"/>
</dbReference>
<dbReference type="HOGENOM" id="CLU_016733_10_0_4"/>
<dbReference type="OrthoDB" id="9805770at2"/>
<dbReference type="Proteomes" id="UP000008210">
    <property type="component" value="Chromosome 1"/>
</dbReference>
<dbReference type="GO" id="GO:0005737">
    <property type="term" value="C:cytoplasm"/>
    <property type="evidence" value="ECO:0007669"/>
    <property type="project" value="TreeGrafter"/>
</dbReference>
<dbReference type="GO" id="GO:0045254">
    <property type="term" value="C:pyruvate dehydrogenase complex"/>
    <property type="evidence" value="ECO:0007669"/>
    <property type="project" value="InterPro"/>
</dbReference>
<dbReference type="GO" id="GO:0004742">
    <property type="term" value="F:dihydrolipoyllysine-residue acetyltransferase activity"/>
    <property type="evidence" value="ECO:0007669"/>
    <property type="project" value="UniProtKB-EC"/>
</dbReference>
<dbReference type="GO" id="GO:0031405">
    <property type="term" value="F:lipoic acid binding"/>
    <property type="evidence" value="ECO:0007669"/>
    <property type="project" value="TreeGrafter"/>
</dbReference>
<dbReference type="GO" id="GO:0006086">
    <property type="term" value="P:pyruvate decarboxylation to acetyl-CoA"/>
    <property type="evidence" value="ECO:0007669"/>
    <property type="project" value="TreeGrafter"/>
</dbReference>
<dbReference type="CDD" id="cd06849">
    <property type="entry name" value="lipoyl_domain"/>
    <property type="match status" value="2"/>
</dbReference>
<dbReference type="FunFam" id="2.40.50.100:FF:000009">
    <property type="entry name" value="Acetyltransferase component of pyruvate dehydrogenase complex"/>
    <property type="match status" value="2"/>
</dbReference>
<dbReference type="FunFam" id="3.30.559.10:FF:000004">
    <property type="entry name" value="Acetyltransferase component of pyruvate dehydrogenase complex"/>
    <property type="match status" value="1"/>
</dbReference>
<dbReference type="Gene3D" id="2.40.50.100">
    <property type="match status" value="2"/>
</dbReference>
<dbReference type="Gene3D" id="3.30.559.10">
    <property type="entry name" value="Chloramphenicol acetyltransferase-like domain"/>
    <property type="match status" value="1"/>
</dbReference>
<dbReference type="Gene3D" id="4.10.320.10">
    <property type="entry name" value="E3-binding domain"/>
    <property type="match status" value="1"/>
</dbReference>
<dbReference type="InterPro" id="IPR003016">
    <property type="entry name" value="2-oxoA_DH_lipoyl-BS"/>
</dbReference>
<dbReference type="InterPro" id="IPR001078">
    <property type="entry name" value="2-oxoacid_DH_actylTfrase"/>
</dbReference>
<dbReference type="InterPro" id="IPR050743">
    <property type="entry name" value="2-oxoacid_DH_E2_comp"/>
</dbReference>
<dbReference type="InterPro" id="IPR006256">
    <property type="entry name" value="AcTrfase_Pyrv_DH_cplx"/>
</dbReference>
<dbReference type="InterPro" id="IPR000089">
    <property type="entry name" value="Biotin_lipoyl"/>
</dbReference>
<dbReference type="InterPro" id="IPR023213">
    <property type="entry name" value="CAT-like_dom_sf"/>
</dbReference>
<dbReference type="InterPro" id="IPR036625">
    <property type="entry name" value="E3-bd_dom_sf"/>
</dbReference>
<dbReference type="InterPro" id="IPR004167">
    <property type="entry name" value="PSBD"/>
</dbReference>
<dbReference type="InterPro" id="IPR011053">
    <property type="entry name" value="Single_hybrid_motif"/>
</dbReference>
<dbReference type="NCBIfam" id="TIGR01348">
    <property type="entry name" value="PDHac_trf_long"/>
    <property type="match status" value="1"/>
</dbReference>
<dbReference type="PANTHER" id="PTHR43178">
    <property type="entry name" value="DIHYDROLIPOAMIDE ACETYLTRANSFERASE COMPONENT OF PYRUVATE DEHYDROGENASE COMPLEX"/>
    <property type="match status" value="1"/>
</dbReference>
<dbReference type="PANTHER" id="PTHR43178:SF2">
    <property type="entry name" value="DIHYDROLIPOYLLYSINE-RESIDUE ACETYLTRANSFERASE COMPONENT OF PYRUVATE DEHYDROGENASE COMPLEX"/>
    <property type="match status" value="1"/>
</dbReference>
<dbReference type="Pfam" id="PF00198">
    <property type="entry name" value="2-oxoacid_dh"/>
    <property type="match status" value="1"/>
</dbReference>
<dbReference type="Pfam" id="PF00364">
    <property type="entry name" value="Biotin_lipoyl"/>
    <property type="match status" value="2"/>
</dbReference>
<dbReference type="Pfam" id="PF02817">
    <property type="entry name" value="E3_binding"/>
    <property type="match status" value="1"/>
</dbReference>
<dbReference type="SUPFAM" id="SSF52777">
    <property type="entry name" value="CoA-dependent acyltransferases"/>
    <property type="match status" value="1"/>
</dbReference>
<dbReference type="SUPFAM" id="SSF47005">
    <property type="entry name" value="Peripheral subunit-binding domain of 2-oxo acid dehydrogenase complex"/>
    <property type="match status" value="1"/>
</dbReference>
<dbReference type="SUPFAM" id="SSF51230">
    <property type="entry name" value="Single hybrid motif"/>
    <property type="match status" value="2"/>
</dbReference>
<dbReference type="PROSITE" id="PS50968">
    <property type="entry name" value="BIOTINYL_LIPOYL"/>
    <property type="match status" value="2"/>
</dbReference>
<dbReference type="PROSITE" id="PS00189">
    <property type="entry name" value="LIPOYL"/>
    <property type="match status" value="2"/>
</dbReference>
<dbReference type="PROSITE" id="PS51826">
    <property type="entry name" value="PSBD"/>
    <property type="match status" value="1"/>
</dbReference>
<protein>
    <recommendedName>
        <fullName>Dihydrolipoyllysine-residue acetyltransferase component of pyruvate dehydrogenase complex</fullName>
        <ecNumber>2.3.1.12</ecNumber>
    </recommendedName>
    <alternativeName>
        <fullName>Dihydrolipoamide acetyltransferase component of pyruvate dehydrogenase complex</fullName>
    </alternativeName>
    <alternativeName>
        <fullName>E2</fullName>
    </alternativeName>
</protein>
<organism>
    <name type="scientific">Cupriavidus necator (strain ATCC 17699 / DSM 428 / KCTC 22496 / NCIMB 10442 / H16 / Stanier 337)</name>
    <name type="common">Ralstonia eutropha</name>
    <dbReference type="NCBI Taxonomy" id="381666"/>
    <lineage>
        <taxon>Bacteria</taxon>
        <taxon>Pseudomonadati</taxon>
        <taxon>Pseudomonadota</taxon>
        <taxon>Betaproteobacteria</taxon>
        <taxon>Burkholderiales</taxon>
        <taxon>Burkholderiaceae</taxon>
        <taxon>Cupriavidus</taxon>
    </lineage>
</organism>
<accession>Q59098</accession>
<accession>Q0KBW0</accession>